<proteinExistence type="inferred from homology"/>
<reference key="1">
    <citation type="submission" date="2005-08" db="EMBL/GenBank/DDBJ databases">
        <title>Complete sequence of chromosome 1 of Nitrosospira multiformis ATCC 25196.</title>
        <authorList>
            <person name="Copeland A."/>
            <person name="Lucas S."/>
            <person name="Lapidus A."/>
            <person name="Barry K."/>
            <person name="Detter J.C."/>
            <person name="Glavina T."/>
            <person name="Hammon N."/>
            <person name="Israni S."/>
            <person name="Pitluck S."/>
            <person name="Chain P."/>
            <person name="Malfatti S."/>
            <person name="Shin M."/>
            <person name="Vergez L."/>
            <person name="Schmutz J."/>
            <person name="Larimer F."/>
            <person name="Land M."/>
            <person name="Hauser L."/>
            <person name="Kyrpides N."/>
            <person name="Lykidis A."/>
            <person name="Richardson P."/>
        </authorList>
    </citation>
    <scope>NUCLEOTIDE SEQUENCE [LARGE SCALE GENOMIC DNA]</scope>
    <source>
        <strain>ATCC 25196 / NCIMB 11849 / C 71</strain>
    </source>
</reference>
<keyword id="KW-0119">Carbohydrate metabolism</keyword>
<keyword id="KW-0378">Hydrolase</keyword>
<keyword id="KW-0460">Magnesium</keyword>
<keyword id="KW-0479">Metal-binding</keyword>
<keyword id="KW-1185">Reference proteome</keyword>
<organism>
    <name type="scientific">Nitrosospira multiformis (strain ATCC 25196 / NCIMB 11849 / C 71)</name>
    <dbReference type="NCBI Taxonomy" id="323848"/>
    <lineage>
        <taxon>Bacteria</taxon>
        <taxon>Pseudomonadati</taxon>
        <taxon>Pseudomonadota</taxon>
        <taxon>Betaproteobacteria</taxon>
        <taxon>Nitrosomonadales</taxon>
        <taxon>Nitrosomonadaceae</taxon>
        <taxon>Nitrosospira</taxon>
    </lineage>
</organism>
<gene>
    <name type="ordered locus">Nmul_A2370</name>
</gene>
<name>GPH_NITMU</name>
<comment type="function">
    <text evidence="1">Specifically catalyzes the dephosphorylation of 2-phosphoglycolate. Is involved in the dissimilation of the intracellular 2-phosphoglycolate formed during the DNA repair of 3'-phosphoglycolate ends, a major class of DNA lesions induced by oxidative stress.</text>
</comment>
<comment type="catalytic activity">
    <reaction evidence="1">
        <text>2-phosphoglycolate + H2O = glycolate + phosphate</text>
        <dbReference type="Rhea" id="RHEA:14369"/>
        <dbReference type="ChEBI" id="CHEBI:15377"/>
        <dbReference type="ChEBI" id="CHEBI:29805"/>
        <dbReference type="ChEBI" id="CHEBI:43474"/>
        <dbReference type="ChEBI" id="CHEBI:58033"/>
        <dbReference type="EC" id="3.1.3.18"/>
    </reaction>
</comment>
<comment type="cofactor">
    <cofactor evidence="1">
        <name>Mg(2+)</name>
        <dbReference type="ChEBI" id="CHEBI:18420"/>
    </cofactor>
</comment>
<comment type="pathway">
    <text evidence="1">Organic acid metabolism; glycolate biosynthesis; glycolate from 2-phosphoglycolate: step 1/1.</text>
</comment>
<comment type="similarity">
    <text evidence="1">Belongs to the HAD-like hydrolase superfamily. CbbY/CbbZ/Gph/YieH family.</text>
</comment>
<dbReference type="EC" id="3.1.3.18" evidence="1"/>
<dbReference type="EMBL" id="CP000103">
    <property type="protein sequence ID" value="ABB75659.1"/>
    <property type="molecule type" value="Genomic_DNA"/>
</dbReference>
<dbReference type="RefSeq" id="WP_011381660.1">
    <property type="nucleotide sequence ID" value="NC_007614.1"/>
</dbReference>
<dbReference type="SMR" id="Q2Y6G2"/>
<dbReference type="STRING" id="323848.Nmul_A2370"/>
<dbReference type="KEGG" id="nmu:Nmul_A2370"/>
<dbReference type="eggNOG" id="COG0546">
    <property type="taxonomic scope" value="Bacteria"/>
</dbReference>
<dbReference type="HOGENOM" id="CLU_045011_19_1_4"/>
<dbReference type="OrthoDB" id="9807630at2"/>
<dbReference type="UniPathway" id="UPA00865">
    <property type="reaction ID" value="UER00834"/>
</dbReference>
<dbReference type="Proteomes" id="UP000002718">
    <property type="component" value="Chromosome"/>
</dbReference>
<dbReference type="GO" id="GO:0005829">
    <property type="term" value="C:cytosol"/>
    <property type="evidence" value="ECO:0007669"/>
    <property type="project" value="TreeGrafter"/>
</dbReference>
<dbReference type="GO" id="GO:0046872">
    <property type="term" value="F:metal ion binding"/>
    <property type="evidence" value="ECO:0007669"/>
    <property type="project" value="UniProtKB-KW"/>
</dbReference>
<dbReference type="GO" id="GO:0008967">
    <property type="term" value="F:phosphoglycolate phosphatase activity"/>
    <property type="evidence" value="ECO:0007669"/>
    <property type="project" value="UniProtKB-UniRule"/>
</dbReference>
<dbReference type="GO" id="GO:0005975">
    <property type="term" value="P:carbohydrate metabolic process"/>
    <property type="evidence" value="ECO:0007669"/>
    <property type="project" value="InterPro"/>
</dbReference>
<dbReference type="GO" id="GO:0006281">
    <property type="term" value="P:DNA repair"/>
    <property type="evidence" value="ECO:0007669"/>
    <property type="project" value="TreeGrafter"/>
</dbReference>
<dbReference type="GO" id="GO:0046295">
    <property type="term" value="P:glycolate biosynthetic process"/>
    <property type="evidence" value="ECO:0007669"/>
    <property type="project" value="UniProtKB-UniRule"/>
</dbReference>
<dbReference type="CDD" id="cd16417">
    <property type="entry name" value="HAD_PGPase"/>
    <property type="match status" value="1"/>
</dbReference>
<dbReference type="FunFam" id="3.40.50.1000:FF:000022">
    <property type="entry name" value="Phosphoglycolate phosphatase"/>
    <property type="match status" value="1"/>
</dbReference>
<dbReference type="Gene3D" id="3.40.50.1000">
    <property type="entry name" value="HAD superfamily/HAD-like"/>
    <property type="match status" value="1"/>
</dbReference>
<dbReference type="Gene3D" id="1.10.150.240">
    <property type="entry name" value="Putative phosphatase, domain 2"/>
    <property type="match status" value="1"/>
</dbReference>
<dbReference type="HAMAP" id="MF_00495">
    <property type="entry name" value="GPH_hydrolase_bact"/>
    <property type="match status" value="1"/>
</dbReference>
<dbReference type="InterPro" id="IPR050155">
    <property type="entry name" value="HAD-like_hydrolase_sf"/>
</dbReference>
<dbReference type="InterPro" id="IPR036412">
    <property type="entry name" value="HAD-like_sf"/>
</dbReference>
<dbReference type="InterPro" id="IPR006439">
    <property type="entry name" value="HAD-SF_hydro_IA"/>
</dbReference>
<dbReference type="InterPro" id="IPR041492">
    <property type="entry name" value="HAD_2"/>
</dbReference>
<dbReference type="InterPro" id="IPR023214">
    <property type="entry name" value="HAD_sf"/>
</dbReference>
<dbReference type="InterPro" id="IPR023198">
    <property type="entry name" value="PGP-like_dom2"/>
</dbReference>
<dbReference type="InterPro" id="IPR037512">
    <property type="entry name" value="PGPase_prok"/>
</dbReference>
<dbReference type="NCBIfam" id="TIGR01549">
    <property type="entry name" value="HAD-SF-IA-v1"/>
    <property type="match status" value="1"/>
</dbReference>
<dbReference type="NCBIfam" id="TIGR01509">
    <property type="entry name" value="HAD-SF-IA-v3"/>
    <property type="match status" value="1"/>
</dbReference>
<dbReference type="NCBIfam" id="TIGR01449">
    <property type="entry name" value="PGP_bact"/>
    <property type="match status" value="1"/>
</dbReference>
<dbReference type="NCBIfam" id="NF009695">
    <property type="entry name" value="PRK13222.1-2"/>
    <property type="match status" value="1"/>
</dbReference>
<dbReference type="PANTHER" id="PTHR43434">
    <property type="entry name" value="PHOSPHOGLYCOLATE PHOSPHATASE"/>
    <property type="match status" value="1"/>
</dbReference>
<dbReference type="PANTHER" id="PTHR43434:SF1">
    <property type="entry name" value="PHOSPHOGLYCOLATE PHOSPHATASE"/>
    <property type="match status" value="1"/>
</dbReference>
<dbReference type="Pfam" id="PF13419">
    <property type="entry name" value="HAD_2"/>
    <property type="match status" value="1"/>
</dbReference>
<dbReference type="PRINTS" id="PR00413">
    <property type="entry name" value="HADHALOGNASE"/>
</dbReference>
<dbReference type="SFLD" id="SFLDG01135">
    <property type="entry name" value="C1.5.6:_HAD__Beta-PGM__Phospha"/>
    <property type="match status" value="1"/>
</dbReference>
<dbReference type="SFLD" id="SFLDS00003">
    <property type="entry name" value="Haloacid_Dehalogenase"/>
    <property type="match status" value="1"/>
</dbReference>
<dbReference type="SUPFAM" id="SSF56784">
    <property type="entry name" value="HAD-like"/>
    <property type="match status" value="1"/>
</dbReference>
<accession>Q2Y6G2</accession>
<sequence>MHFPLPIKAVMIDLDGTLLDTAPDLATAANMMLKELGKAELPLETIQSYIGKGIEKLVKRSLTGDLDGEPDSDLLRRAMPLYERSYEKTLYVDTRAYPGVREGLNALRAGGFRLACVTNKAEAFTLPLLRAAELLDYFDIVVSGDSLPKKKPDPMPLLHACERFEIQPHDMLLVGDSLNDAQAARAAGSHVFCVPYGYNEGRDVYELDCDAIVPSLYEATKLIQKSS</sequence>
<feature type="chain" id="PRO_0000238163" description="Phosphoglycolate phosphatase">
    <location>
        <begin position="1"/>
        <end position="227"/>
    </location>
</feature>
<feature type="active site" description="Nucleophile" evidence="1">
    <location>
        <position position="13"/>
    </location>
</feature>
<feature type="binding site" evidence="1">
    <location>
        <position position="13"/>
    </location>
    <ligand>
        <name>Mg(2+)</name>
        <dbReference type="ChEBI" id="CHEBI:18420"/>
    </ligand>
</feature>
<feature type="binding site" evidence="1">
    <location>
        <position position="15"/>
    </location>
    <ligand>
        <name>Mg(2+)</name>
        <dbReference type="ChEBI" id="CHEBI:18420"/>
    </ligand>
</feature>
<feature type="binding site" evidence="1">
    <location>
        <position position="176"/>
    </location>
    <ligand>
        <name>Mg(2+)</name>
        <dbReference type="ChEBI" id="CHEBI:18420"/>
    </ligand>
</feature>
<protein>
    <recommendedName>
        <fullName evidence="1">Phosphoglycolate phosphatase</fullName>
        <shortName evidence="1">PGP</shortName>
        <shortName evidence="1">PGPase</shortName>
        <ecNumber evidence="1">3.1.3.18</ecNumber>
    </recommendedName>
</protein>
<evidence type="ECO:0000255" key="1">
    <source>
        <dbReference type="HAMAP-Rule" id="MF_00495"/>
    </source>
</evidence>